<evidence type="ECO:0000250" key="1"/>
<evidence type="ECO:0000255" key="2"/>
<evidence type="ECO:0000255" key="3">
    <source>
        <dbReference type="PROSITE-ProRule" id="PRU00521"/>
    </source>
</evidence>
<evidence type="ECO:0000256" key="4">
    <source>
        <dbReference type="SAM" id="MobiDB-lite"/>
    </source>
</evidence>
<keyword id="KW-1003">Cell membrane</keyword>
<keyword id="KW-1015">Disulfide bond</keyword>
<keyword id="KW-0297">G-protein coupled receptor</keyword>
<keyword id="KW-0325">Glycoprotein</keyword>
<keyword id="KW-0472">Membrane</keyword>
<keyword id="KW-0675">Receptor</keyword>
<keyword id="KW-1185">Reference proteome</keyword>
<keyword id="KW-0807">Transducer</keyword>
<keyword id="KW-0812">Transmembrane</keyword>
<keyword id="KW-1133">Transmembrane helix</keyword>
<feature type="chain" id="PRO_0000236801" description="Chemokine C-C motif receptor-like 2">
    <location>
        <begin position="1"/>
        <end position="350"/>
    </location>
</feature>
<feature type="topological domain" description="Extracellular" evidence="2">
    <location>
        <begin position="1"/>
        <end position="43"/>
    </location>
</feature>
<feature type="transmembrane region" description="Helical; Name=1" evidence="2">
    <location>
        <begin position="44"/>
        <end position="64"/>
    </location>
</feature>
<feature type="topological domain" description="Cytoplasmic" evidence="2">
    <location>
        <begin position="65"/>
        <end position="74"/>
    </location>
</feature>
<feature type="transmembrane region" description="Helical; Name=2" evidence="2">
    <location>
        <begin position="75"/>
        <end position="95"/>
    </location>
</feature>
<feature type="topological domain" description="Extracellular" evidence="2">
    <location>
        <begin position="96"/>
        <end position="110"/>
    </location>
</feature>
<feature type="transmembrane region" description="Helical; Name=3" evidence="2">
    <location>
        <begin position="111"/>
        <end position="131"/>
    </location>
</feature>
<feature type="topological domain" description="Cytoplasmic" evidence="2">
    <location>
        <begin position="132"/>
        <end position="149"/>
    </location>
</feature>
<feature type="transmembrane region" description="Helical; Name=4" evidence="2">
    <location>
        <begin position="150"/>
        <end position="170"/>
    </location>
</feature>
<feature type="topological domain" description="Extracellular" evidence="2">
    <location>
        <begin position="171"/>
        <end position="204"/>
    </location>
</feature>
<feature type="transmembrane region" description="Helical; Name=5" evidence="2">
    <location>
        <begin position="205"/>
        <end position="225"/>
    </location>
</feature>
<feature type="topological domain" description="Cytoplasmic" evidence="2">
    <location>
        <begin position="226"/>
        <end position="244"/>
    </location>
</feature>
<feature type="transmembrane region" description="Helical; Name=6" evidence="2">
    <location>
        <begin position="245"/>
        <end position="265"/>
    </location>
</feature>
<feature type="topological domain" description="Extracellular" evidence="2">
    <location>
        <begin position="266"/>
        <end position="288"/>
    </location>
</feature>
<feature type="transmembrane region" description="Helical; Name=7" evidence="2">
    <location>
        <begin position="289"/>
        <end position="309"/>
    </location>
</feature>
<feature type="topological domain" description="Cytoplasmic" evidence="2">
    <location>
        <begin position="310"/>
        <end position="350"/>
    </location>
</feature>
<feature type="region of interest" description="Disordered" evidence="4">
    <location>
        <begin position="329"/>
        <end position="350"/>
    </location>
</feature>
<feature type="glycosylation site" description="N-linked (GlcNAc...) asparagine" evidence="2">
    <location>
        <position position="3"/>
    </location>
</feature>
<feature type="disulfide bond" evidence="3">
    <location>
        <begin position="109"/>
        <end position="187"/>
    </location>
</feature>
<protein>
    <recommendedName>
        <fullName>Chemokine C-C motif receptor-like 2</fullName>
    </recommendedName>
</protein>
<proteinExistence type="evidence at transcript level"/>
<name>CCRL2_PIG</name>
<dbReference type="EMBL" id="AB119273">
    <property type="protein sequence ID" value="BAD12136.1"/>
    <property type="molecule type" value="mRNA"/>
</dbReference>
<dbReference type="EMBL" id="AB119274">
    <property type="protein sequence ID" value="BAD12137.1"/>
    <property type="molecule type" value="mRNA"/>
</dbReference>
<dbReference type="EMBL" id="AP006185">
    <property type="protein sequence ID" value="BAD08650.1"/>
    <property type="molecule type" value="Genomic_DNA"/>
</dbReference>
<dbReference type="EMBL" id="AP006435">
    <property type="protein sequence ID" value="BAD08657.1"/>
    <property type="molecule type" value="Genomic_DNA"/>
</dbReference>
<dbReference type="RefSeq" id="NP_001001617.1">
    <property type="nucleotide sequence ID" value="NM_001001617.1"/>
</dbReference>
<dbReference type="RefSeq" id="XP_005669514.1">
    <property type="nucleotide sequence ID" value="XM_005669457.1"/>
</dbReference>
<dbReference type="RefSeq" id="XP_005669515.1">
    <property type="nucleotide sequence ID" value="XM_005669458.2"/>
</dbReference>
<dbReference type="RefSeq" id="XP_013837019.1">
    <property type="nucleotide sequence ID" value="XM_013981565.1"/>
</dbReference>
<dbReference type="RefSeq" id="XP_013837020.1">
    <property type="nucleotide sequence ID" value="XM_013981566.1"/>
</dbReference>
<dbReference type="RefSeq" id="XP_013837021.1">
    <property type="nucleotide sequence ID" value="XM_013981567.2"/>
</dbReference>
<dbReference type="RefSeq" id="XP_013837022.1">
    <property type="nucleotide sequence ID" value="XM_013981568.1"/>
</dbReference>
<dbReference type="SMR" id="Q75ZH0"/>
<dbReference type="FunCoup" id="Q75ZH0">
    <property type="interactions" value="84"/>
</dbReference>
<dbReference type="STRING" id="9823.ENSSSCP00000066840"/>
<dbReference type="GlyCosmos" id="Q75ZH0">
    <property type="glycosylation" value="1 site, No reported glycans"/>
</dbReference>
<dbReference type="GlyGen" id="Q75ZH0">
    <property type="glycosylation" value="1 site"/>
</dbReference>
<dbReference type="PaxDb" id="9823-ENSSSCP00000024934"/>
<dbReference type="Ensembl" id="ENSSSCT00000030552.4">
    <property type="protein sequence ID" value="ENSSSCP00000024934.1"/>
    <property type="gene ID" value="ENSSSCG00000023557.4"/>
</dbReference>
<dbReference type="Ensembl" id="ENSSSCT00025071355.1">
    <property type="protein sequence ID" value="ENSSSCP00025030901.1"/>
    <property type="gene ID" value="ENSSSCG00025052185.1"/>
</dbReference>
<dbReference type="Ensembl" id="ENSSSCT00025071410.1">
    <property type="protein sequence ID" value="ENSSSCP00025030927.1"/>
    <property type="gene ID" value="ENSSSCG00025052185.1"/>
</dbReference>
<dbReference type="Ensembl" id="ENSSSCT00025071457.1">
    <property type="protein sequence ID" value="ENSSSCP00025030951.1"/>
    <property type="gene ID" value="ENSSSCG00025052185.1"/>
</dbReference>
<dbReference type="Ensembl" id="ENSSSCT00035048162.1">
    <property type="protein sequence ID" value="ENSSSCP00035019253.1"/>
    <property type="gene ID" value="ENSSSCG00035036343.1"/>
</dbReference>
<dbReference type="Ensembl" id="ENSSSCT00035048167.1">
    <property type="protein sequence ID" value="ENSSSCP00035019255.1"/>
    <property type="gene ID" value="ENSSSCG00035036343.1"/>
</dbReference>
<dbReference type="Ensembl" id="ENSSSCT00035048173.1">
    <property type="protein sequence ID" value="ENSSSCP00035019258.1"/>
    <property type="gene ID" value="ENSSSCG00035036343.1"/>
</dbReference>
<dbReference type="Ensembl" id="ENSSSCT00065044694.1">
    <property type="protein sequence ID" value="ENSSSCP00065019107.1"/>
    <property type="gene ID" value="ENSSSCG00065032930.1"/>
</dbReference>
<dbReference type="Ensembl" id="ENSSSCT00065044698.1">
    <property type="protein sequence ID" value="ENSSSCP00065019109.1"/>
    <property type="gene ID" value="ENSSSCG00065032930.1"/>
</dbReference>
<dbReference type="Ensembl" id="ENSSSCT00065044704.1">
    <property type="protein sequence ID" value="ENSSSCP00065019112.1"/>
    <property type="gene ID" value="ENSSSCG00065032930.1"/>
</dbReference>
<dbReference type="Ensembl" id="ENSSSCT00070014431.1">
    <property type="protein sequence ID" value="ENSSSCP00070011906.1"/>
    <property type="gene ID" value="ENSSSCG00070007487.1"/>
</dbReference>
<dbReference type="Ensembl" id="ENSSSCT00070014437.1">
    <property type="protein sequence ID" value="ENSSSCP00070011912.1"/>
    <property type="gene ID" value="ENSSSCG00070007487.1"/>
</dbReference>
<dbReference type="Ensembl" id="ENSSSCT00105077741">
    <property type="protein sequence ID" value="ENSSSCP00105055059"/>
    <property type="gene ID" value="ENSSSCG00105040764"/>
</dbReference>
<dbReference type="Ensembl" id="ENSSSCT00105077745">
    <property type="protein sequence ID" value="ENSSSCP00105055063"/>
    <property type="gene ID" value="ENSSSCG00105040764"/>
</dbReference>
<dbReference type="Ensembl" id="ENSSSCT00105077748">
    <property type="protein sequence ID" value="ENSSSCP00105055066"/>
    <property type="gene ID" value="ENSSSCG00105040764"/>
</dbReference>
<dbReference type="Ensembl" id="ENSSSCT00105077750">
    <property type="protein sequence ID" value="ENSSSCP00105055068"/>
    <property type="gene ID" value="ENSSSCG00105040764"/>
</dbReference>
<dbReference type="Ensembl" id="ENSSSCT00110026126">
    <property type="protein sequence ID" value="ENSSSCP00110017533"/>
    <property type="gene ID" value="ENSSSCG00110013691"/>
</dbReference>
<dbReference type="Ensembl" id="ENSSSCT00110026130">
    <property type="protein sequence ID" value="ENSSSCP00110017537"/>
    <property type="gene ID" value="ENSSSCG00110013691"/>
</dbReference>
<dbReference type="Ensembl" id="ENSSSCT00110026138">
    <property type="protein sequence ID" value="ENSSSCP00110017544"/>
    <property type="gene ID" value="ENSSSCG00110013691"/>
</dbReference>
<dbReference type="Ensembl" id="ENSSSCT00115015102">
    <property type="protein sequence ID" value="ENSSSCP00115014259"/>
    <property type="gene ID" value="ENSSSCG00115008662"/>
</dbReference>
<dbReference type="Ensembl" id="ENSSSCT00115015104">
    <property type="protein sequence ID" value="ENSSSCP00115014261"/>
    <property type="gene ID" value="ENSSSCG00115008662"/>
</dbReference>
<dbReference type="Ensembl" id="ENSSSCT00130041013">
    <property type="protein sequence ID" value="ENSSSCP00130017244"/>
    <property type="gene ID" value="ENSSSCG00130021161"/>
</dbReference>
<dbReference type="Ensembl" id="ENSSSCT00130041018">
    <property type="protein sequence ID" value="ENSSSCP00130028877"/>
    <property type="gene ID" value="ENSSSCG00130021161"/>
</dbReference>
<dbReference type="Ensembl" id="ENSSSCT00130041031">
    <property type="protein sequence ID" value="ENSSSCP00130028881"/>
    <property type="gene ID" value="ENSSSCG00130021161"/>
</dbReference>
<dbReference type="GeneID" id="414370"/>
<dbReference type="KEGG" id="ssc:414370"/>
<dbReference type="CTD" id="9034"/>
<dbReference type="VGNC" id="VGNC:86375">
    <property type="gene designation" value="CCRL2"/>
</dbReference>
<dbReference type="eggNOG" id="KOG3656">
    <property type="taxonomic scope" value="Eukaryota"/>
</dbReference>
<dbReference type="GeneTree" id="ENSGT01020000230359"/>
<dbReference type="HOGENOM" id="CLU_009579_8_3_1"/>
<dbReference type="InParanoid" id="Q75ZH0"/>
<dbReference type="OMA" id="FYKPQME"/>
<dbReference type="OrthoDB" id="9802979at2759"/>
<dbReference type="TreeFam" id="TF330966"/>
<dbReference type="Reactome" id="R-SSC-380108">
    <property type="pathway name" value="Chemokine receptors bind chemokines"/>
</dbReference>
<dbReference type="Proteomes" id="UP000008227">
    <property type="component" value="Chromosome 13"/>
</dbReference>
<dbReference type="Proteomes" id="UP000314985">
    <property type="component" value="Chromosome 13"/>
</dbReference>
<dbReference type="Proteomes" id="UP000694570">
    <property type="component" value="Unplaced"/>
</dbReference>
<dbReference type="Proteomes" id="UP000694571">
    <property type="component" value="Unplaced"/>
</dbReference>
<dbReference type="Proteomes" id="UP000694720">
    <property type="component" value="Unplaced"/>
</dbReference>
<dbReference type="Proteomes" id="UP000694722">
    <property type="component" value="Unplaced"/>
</dbReference>
<dbReference type="Proteomes" id="UP000694723">
    <property type="component" value="Unplaced"/>
</dbReference>
<dbReference type="Proteomes" id="UP000694724">
    <property type="component" value="Unplaced"/>
</dbReference>
<dbReference type="Proteomes" id="UP000694725">
    <property type="component" value="Unplaced"/>
</dbReference>
<dbReference type="Proteomes" id="UP000694726">
    <property type="component" value="Unplaced"/>
</dbReference>
<dbReference type="Proteomes" id="UP000694727">
    <property type="component" value="Unplaced"/>
</dbReference>
<dbReference type="Proteomes" id="UP000694728">
    <property type="component" value="Unplaced"/>
</dbReference>
<dbReference type="Bgee" id="ENSSSCG00000023557">
    <property type="expression patterns" value="Expressed in blood and 36 other cell types or tissues"/>
</dbReference>
<dbReference type="GO" id="GO:0005737">
    <property type="term" value="C:cytoplasm"/>
    <property type="evidence" value="ECO:0000318"/>
    <property type="project" value="GO_Central"/>
</dbReference>
<dbReference type="GO" id="GO:0009897">
    <property type="term" value="C:external side of plasma membrane"/>
    <property type="evidence" value="ECO:0000318"/>
    <property type="project" value="GO_Central"/>
</dbReference>
<dbReference type="GO" id="GO:0005886">
    <property type="term" value="C:plasma membrane"/>
    <property type="evidence" value="ECO:0000250"/>
    <property type="project" value="UniProtKB"/>
</dbReference>
<dbReference type="GO" id="GO:0019957">
    <property type="term" value="F:C-C chemokine binding"/>
    <property type="evidence" value="ECO:0000318"/>
    <property type="project" value="GO_Central"/>
</dbReference>
<dbReference type="GO" id="GO:0016493">
    <property type="term" value="F:C-C chemokine receptor activity"/>
    <property type="evidence" value="ECO:0000318"/>
    <property type="project" value="GO_Central"/>
</dbReference>
<dbReference type="GO" id="GO:0048020">
    <property type="term" value="F:CCR chemokine receptor binding"/>
    <property type="evidence" value="ECO:0007669"/>
    <property type="project" value="Ensembl"/>
</dbReference>
<dbReference type="GO" id="GO:0019722">
    <property type="term" value="P:calcium-mediated signaling"/>
    <property type="evidence" value="ECO:0000318"/>
    <property type="project" value="GO_Central"/>
</dbReference>
<dbReference type="GO" id="GO:0060326">
    <property type="term" value="P:cell chemotaxis"/>
    <property type="evidence" value="ECO:0000318"/>
    <property type="project" value="GO_Central"/>
</dbReference>
<dbReference type="GO" id="GO:0006955">
    <property type="term" value="P:immune response"/>
    <property type="evidence" value="ECO:0000318"/>
    <property type="project" value="GO_Central"/>
</dbReference>
<dbReference type="GO" id="GO:0006954">
    <property type="term" value="P:inflammatory response"/>
    <property type="evidence" value="ECO:0000250"/>
    <property type="project" value="UniProtKB"/>
</dbReference>
<dbReference type="GO" id="GO:0007204">
    <property type="term" value="P:positive regulation of cytosolic calcium ion concentration"/>
    <property type="evidence" value="ECO:0000318"/>
    <property type="project" value="GO_Central"/>
</dbReference>
<dbReference type="CDD" id="cd15171">
    <property type="entry name" value="7tmA_CCRL2"/>
    <property type="match status" value="1"/>
</dbReference>
<dbReference type="FunFam" id="1.20.1070.10:FF:000130">
    <property type="entry name" value="Chemokine (C-C motif) receptor 2"/>
    <property type="match status" value="1"/>
</dbReference>
<dbReference type="Gene3D" id="1.20.1070.10">
    <property type="entry name" value="Rhodopsin 7-helix transmembrane proteins"/>
    <property type="match status" value="1"/>
</dbReference>
<dbReference type="InterPro" id="IPR050119">
    <property type="entry name" value="CCR1-9-like"/>
</dbReference>
<dbReference type="InterPro" id="IPR000355">
    <property type="entry name" value="Chemokine_rcpt"/>
</dbReference>
<dbReference type="InterPro" id="IPR000276">
    <property type="entry name" value="GPCR_Rhodpsn"/>
</dbReference>
<dbReference type="InterPro" id="IPR017452">
    <property type="entry name" value="GPCR_Rhodpsn_7TM"/>
</dbReference>
<dbReference type="PANTHER" id="PTHR10489:SF655">
    <property type="entry name" value="C-C CHEMOKINE RECEPTOR-LIKE 2"/>
    <property type="match status" value="1"/>
</dbReference>
<dbReference type="PANTHER" id="PTHR10489">
    <property type="entry name" value="CELL ADHESION MOLECULE"/>
    <property type="match status" value="1"/>
</dbReference>
<dbReference type="Pfam" id="PF00001">
    <property type="entry name" value="7tm_1"/>
    <property type="match status" value="1"/>
</dbReference>
<dbReference type="PRINTS" id="PR00657">
    <property type="entry name" value="CCCHEMOKINER"/>
</dbReference>
<dbReference type="PRINTS" id="PR00237">
    <property type="entry name" value="GPCRRHODOPSN"/>
</dbReference>
<dbReference type="SUPFAM" id="SSF81321">
    <property type="entry name" value="Family A G protein-coupled receptor-like"/>
    <property type="match status" value="1"/>
</dbReference>
<dbReference type="PROSITE" id="PS50262">
    <property type="entry name" value="G_PROTEIN_RECEP_F1_2"/>
    <property type="match status" value="1"/>
</dbReference>
<comment type="function">
    <text evidence="1">Receptor for CCL19 and chemerin/RARRES2. Does not appear to be a signaling receptor, but may have a role in modulating chemokine-triggered immune responses by capturing and internalizing CCL19 or by presenting RARRES2 ligand to CMKLR1, a functional signaling receptor. Plays a critical role for the development of Th2 responses (By similarity).</text>
</comment>
<comment type="subcellular location">
    <subcellularLocation>
        <location evidence="1">Cell membrane</location>
        <topology evidence="1">Multi-pass membrane protein</topology>
    </subcellularLocation>
</comment>
<comment type="domain">
    <text evidence="1">Lacks the conserved DRYLAIV motif in the second intracellular loop that is required for signaling of functional chemokine receptors.</text>
</comment>
<comment type="similarity">
    <text evidence="3">Belongs to the G-protein coupled receptor 1 family.</text>
</comment>
<gene>
    <name type="primary">CCRL2</name>
</gene>
<sequence length="350" mass="40592">MANYTSAPEDDYDVFIEDDLSNDERELCSPYDPQALLAQLVPYLFITVFLVGLLDNILVVLIMVKYKGLKQVENIYLLNLAVCNLCFLCTLPFWVHMAWHEGDPGEPLCKILLVLYSVGLFSEAFFNVLLTVQRYQKFFQMRGFFSATRMVAGSIFPSALVWVIAVLVMLPELAFYKPQMENQKYKCFFGRPLFLPADETFWKHFLTLKMNILGFLLPLFVFVFCYVRMRRTLKFGERGYDLFKLVFTIMVVFLLMWGPYNIALFLSAFNEHFSLHGCESSHNLDRSTLITKIIATTHCCVNPLLYVFFDEAFRKHLYHFCHLCNDTAPQPTEEPAQGTSREEPCLSTKM</sequence>
<organism>
    <name type="scientific">Sus scrofa</name>
    <name type="common">Pig</name>
    <dbReference type="NCBI Taxonomy" id="9823"/>
    <lineage>
        <taxon>Eukaryota</taxon>
        <taxon>Metazoa</taxon>
        <taxon>Chordata</taxon>
        <taxon>Craniata</taxon>
        <taxon>Vertebrata</taxon>
        <taxon>Euteleostomi</taxon>
        <taxon>Mammalia</taxon>
        <taxon>Eutheria</taxon>
        <taxon>Laurasiatheria</taxon>
        <taxon>Artiodactyla</taxon>
        <taxon>Suina</taxon>
        <taxon>Suidae</taxon>
        <taxon>Sus</taxon>
    </lineage>
</organism>
<accession>Q75ZH0</accession>
<reference key="1">
    <citation type="journal article" date="2005" name="Gene">
        <title>Genomic structure of eight porcine chemokine receptors and intergene sharing of an exon between CCR1 and XCR1.</title>
        <authorList>
            <person name="Shinkai H."/>
            <person name="Morozumi T."/>
            <person name="Toki D."/>
            <person name="Eguchi T."/>
            <person name="Muneta Y."/>
            <person name="Awata T."/>
            <person name="Uenishi H."/>
        </authorList>
    </citation>
    <scope>NUCLEOTIDE SEQUENCE [GENOMIC DNA / MRNA]</scope>
</reference>